<evidence type="ECO:0000255" key="1">
    <source>
        <dbReference type="HAMAP-Rule" id="MF_00142"/>
    </source>
</evidence>
<accession>A1AHX3</accession>
<dbReference type="EMBL" id="CP000468">
    <property type="protein sequence ID" value="ABJ03263.1"/>
    <property type="molecule type" value="Genomic_DNA"/>
</dbReference>
<dbReference type="RefSeq" id="WP_000999936.1">
    <property type="nucleotide sequence ID" value="NZ_CADILS010000071.1"/>
</dbReference>
<dbReference type="BMRB" id="A1AHX3"/>
<dbReference type="SMR" id="A1AHX3"/>
<dbReference type="KEGG" id="ecv:APECO1_2671"/>
<dbReference type="HOGENOM" id="CLU_080880_3_0_6"/>
<dbReference type="Proteomes" id="UP000008216">
    <property type="component" value="Chromosome"/>
</dbReference>
<dbReference type="GO" id="GO:0005829">
    <property type="term" value="C:cytosol"/>
    <property type="evidence" value="ECO:0007669"/>
    <property type="project" value="TreeGrafter"/>
</dbReference>
<dbReference type="GO" id="GO:0008199">
    <property type="term" value="F:ferric iron binding"/>
    <property type="evidence" value="ECO:0007669"/>
    <property type="project" value="InterPro"/>
</dbReference>
<dbReference type="GO" id="GO:0008198">
    <property type="term" value="F:ferrous iron binding"/>
    <property type="evidence" value="ECO:0007669"/>
    <property type="project" value="TreeGrafter"/>
</dbReference>
<dbReference type="GO" id="GO:0016226">
    <property type="term" value="P:iron-sulfur cluster assembly"/>
    <property type="evidence" value="ECO:0007669"/>
    <property type="project" value="UniProtKB-UniRule"/>
</dbReference>
<dbReference type="CDD" id="cd00503">
    <property type="entry name" value="Frataxin"/>
    <property type="match status" value="1"/>
</dbReference>
<dbReference type="FunFam" id="3.30.920.10:FF:000001">
    <property type="entry name" value="Iron-sulfur cluster assembly protein CyaY"/>
    <property type="match status" value="1"/>
</dbReference>
<dbReference type="Gene3D" id="3.30.920.10">
    <property type="entry name" value="Frataxin/CyaY"/>
    <property type="match status" value="1"/>
</dbReference>
<dbReference type="HAMAP" id="MF_00142">
    <property type="entry name" value="CyaY"/>
    <property type="match status" value="1"/>
</dbReference>
<dbReference type="InterPro" id="IPR047584">
    <property type="entry name" value="CyaY"/>
</dbReference>
<dbReference type="InterPro" id="IPR002908">
    <property type="entry name" value="Frataxin/CyaY"/>
</dbReference>
<dbReference type="InterPro" id="IPR036524">
    <property type="entry name" value="Frataxin/CyaY_sf"/>
</dbReference>
<dbReference type="InterPro" id="IPR020895">
    <property type="entry name" value="Frataxin_CS"/>
</dbReference>
<dbReference type="NCBIfam" id="TIGR03421">
    <property type="entry name" value="FeS_CyaY"/>
    <property type="match status" value="1"/>
</dbReference>
<dbReference type="PANTHER" id="PTHR16821">
    <property type="entry name" value="FRATAXIN"/>
    <property type="match status" value="1"/>
</dbReference>
<dbReference type="PANTHER" id="PTHR16821:SF2">
    <property type="entry name" value="FRATAXIN, MITOCHONDRIAL"/>
    <property type="match status" value="1"/>
</dbReference>
<dbReference type="Pfam" id="PF01491">
    <property type="entry name" value="Frataxin_Cyay"/>
    <property type="match status" value="1"/>
</dbReference>
<dbReference type="SMART" id="SM01219">
    <property type="entry name" value="Frataxin_Cyay"/>
    <property type="match status" value="1"/>
</dbReference>
<dbReference type="SUPFAM" id="SSF55387">
    <property type="entry name" value="Frataxin/Nqo15-like"/>
    <property type="match status" value="1"/>
</dbReference>
<dbReference type="PROSITE" id="PS01344">
    <property type="entry name" value="FRATAXIN_1"/>
    <property type="match status" value="1"/>
</dbReference>
<dbReference type="PROSITE" id="PS50810">
    <property type="entry name" value="FRATAXIN_2"/>
    <property type="match status" value="1"/>
</dbReference>
<protein>
    <recommendedName>
        <fullName evidence="1">Iron-sulfur cluster assembly protein CyaY</fullName>
    </recommendedName>
</protein>
<reference key="1">
    <citation type="journal article" date="2007" name="J. Bacteriol.">
        <title>The genome sequence of avian pathogenic Escherichia coli strain O1:K1:H7 shares strong similarities with human extraintestinal pathogenic E. coli genomes.</title>
        <authorList>
            <person name="Johnson T.J."/>
            <person name="Kariyawasam S."/>
            <person name="Wannemuehler Y."/>
            <person name="Mangiamele P."/>
            <person name="Johnson S.J."/>
            <person name="Doetkott C."/>
            <person name="Skyberg J.A."/>
            <person name="Lynne A.M."/>
            <person name="Johnson J.R."/>
            <person name="Nolan L.K."/>
        </authorList>
    </citation>
    <scope>NUCLEOTIDE SEQUENCE [LARGE SCALE GENOMIC DNA]</scope>
</reference>
<name>CYAY_ECOK1</name>
<proteinExistence type="inferred from homology"/>
<organism>
    <name type="scientific">Escherichia coli O1:K1 / APEC</name>
    <dbReference type="NCBI Taxonomy" id="405955"/>
    <lineage>
        <taxon>Bacteria</taxon>
        <taxon>Pseudomonadati</taxon>
        <taxon>Pseudomonadota</taxon>
        <taxon>Gammaproteobacteria</taxon>
        <taxon>Enterobacterales</taxon>
        <taxon>Enterobacteriaceae</taxon>
        <taxon>Escherichia</taxon>
    </lineage>
</organism>
<feature type="chain" id="PRO_1000010927" description="Iron-sulfur cluster assembly protein CyaY">
    <location>
        <begin position="1"/>
        <end position="106"/>
    </location>
</feature>
<sequence length="106" mass="12212">MNDSEFHRLADQLWLTIEEHLDDWDGDSDIDCEINGGVLTITFENGSKIIINRQEPLHQVWLATKQGGYHFDLKGDEWICDRSGETFWDLLEQAATQQAGETVSFR</sequence>
<gene>
    <name evidence="1" type="primary">cyaY</name>
    <name type="ordered locus">Ecok1_37690</name>
    <name type="ORF">APECO1_2671</name>
</gene>
<comment type="function">
    <text evidence="1">Involved in iron-sulfur (Fe-S) cluster assembly. May act as a regulator of Fe-S biogenesis.</text>
</comment>
<comment type="similarity">
    <text evidence="1">Belongs to the frataxin family.</text>
</comment>
<keyword id="KW-0408">Iron</keyword>
<keyword id="KW-0479">Metal-binding</keyword>
<keyword id="KW-1185">Reference proteome</keyword>